<protein>
    <recommendedName>
        <fullName evidence="1">Translation initiation factor 5A</fullName>
    </recommendedName>
    <alternativeName>
        <fullName evidence="1">Hypusine-containing protein</fullName>
    </alternativeName>
    <alternativeName>
        <fullName evidence="1">eIF-5A</fullName>
    </alternativeName>
</protein>
<feature type="chain" id="PRO_0000142502" description="Translation initiation factor 5A">
    <location>
        <begin position="1"/>
        <end position="136"/>
    </location>
</feature>
<feature type="modified residue" description="Hypusine" evidence="1">
    <location>
        <position position="37"/>
    </location>
</feature>
<reference key="1">
    <citation type="journal article" date="2005" name="Genome Res.">
        <title>Complete genome sequence of the hyperthermophilic archaeon Thermococcus kodakaraensis KOD1 and comparison with Pyrococcus genomes.</title>
        <authorList>
            <person name="Fukui T."/>
            <person name="Atomi H."/>
            <person name="Kanai T."/>
            <person name="Matsumi R."/>
            <person name="Fujiwara S."/>
            <person name="Imanaka T."/>
        </authorList>
    </citation>
    <scope>NUCLEOTIDE SEQUENCE [LARGE SCALE GENOMIC DNA]</scope>
    <source>
        <strain>ATCC BAA-918 / JCM 12380 / KOD1</strain>
    </source>
</reference>
<organism>
    <name type="scientific">Thermococcus kodakarensis (strain ATCC BAA-918 / JCM 12380 / KOD1)</name>
    <name type="common">Pyrococcus kodakaraensis (strain KOD1)</name>
    <dbReference type="NCBI Taxonomy" id="69014"/>
    <lineage>
        <taxon>Archaea</taxon>
        <taxon>Methanobacteriati</taxon>
        <taxon>Methanobacteriota</taxon>
        <taxon>Thermococci</taxon>
        <taxon>Thermococcales</taxon>
        <taxon>Thermococcaceae</taxon>
        <taxon>Thermococcus</taxon>
    </lineage>
</organism>
<comment type="function">
    <text evidence="1">Functions by promoting the formation of the first peptide bond.</text>
</comment>
<comment type="subcellular location">
    <subcellularLocation>
        <location evidence="1">Cytoplasm</location>
    </subcellularLocation>
</comment>
<comment type="similarity">
    <text evidence="1">Belongs to the eIF-5A family.</text>
</comment>
<sequence>MGDKTKVQVSKLKPGRYIIIDGEPCRIVNVTVSSPGKHGSAKARIEAVGIFDGKVRSIVKPTSAEVDVPIIDKRVGQIIAITPDTVQLMDMETYETFDVPIEGGVDDEVKGQLTEGITVEYWETLGRIQIKKIRGE</sequence>
<accession>Q5JI42</accession>
<name>IF5A_THEKO</name>
<dbReference type="EMBL" id="AP006878">
    <property type="protein sequence ID" value="BAD85067.1"/>
    <property type="molecule type" value="Genomic_DNA"/>
</dbReference>
<dbReference type="RefSeq" id="WP_011249829.1">
    <property type="nucleotide sequence ID" value="NC_006624.1"/>
</dbReference>
<dbReference type="SMR" id="Q5JI42"/>
<dbReference type="FunCoup" id="Q5JI42">
    <property type="interactions" value="111"/>
</dbReference>
<dbReference type="STRING" id="69014.TK0878"/>
<dbReference type="EnsemblBacteria" id="BAD85067">
    <property type="protein sequence ID" value="BAD85067"/>
    <property type="gene ID" value="TK0878"/>
</dbReference>
<dbReference type="GeneID" id="78447393"/>
<dbReference type="KEGG" id="tko:TK0878"/>
<dbReference type="PATRIC" id="fig|69014.16.peg.857"/>
<dbReference type="eggNOG" id="arCOG04277">
    <property type="taxonomic scope" value="Archaea"/>
</dbReference>
<dbReference type="HOGENOM" id="CLU_102600_3_0_2"/>
<dbReference type="InParanoid" id="Q5JI42"/>
<dbReference type="OrthoDB" id="23689at2157"/>
<dbReference type="PhylomeDB" id="Q5JI42"/>
<dbReference type="Proteomes" id="UP000000536">
    <property type="component" value="Chromosome"/>
</dbReference>
<dbReference type="GO" id="GO:0005737">
    <property type="term" value="C:cytoplasm"/>
    <property type="evidence" value="ECO:0007669"/>
    <property type="project" value="UniProtKB-SubCell"/>
</dbReference>
<dbReference type="GO" id="GO:0043022">
    <property type="term" value="F:ribosome binding"/>
    <property type="evidence" value="ECO:0007669"/>
    <property type="project" value="InterPro"/>
</dbReference>
<dbReference type="GO" id="GO:0003723">
    <property type="term" value="F:RNA binding"/>
    <property type="evidence" value="ECO:0007669"/>
    <property type="project" value="InterPro"/>
</dbReference>
<dbReference type="GO" id="GO:0003746">
    <property type="term" value="F:translation elongation factor activity"/>
    <property type="evidence" value="ECO:0000318"/>
    <property type="project" value="GO_Central"/>
</dbReference>
<dbReference type="GO" id="GO:0003743">
    <property type="term" value="F:translation initiation factor activity"/>
    <property type="evidence" value="ECO:0007669"/>
    <property type="project" value="UniProtKB-UniRule"/>
</dbReference>
<dbReference type="GO" id="GO:0045901">
    <property type="term" value="P:positive regulation of translational elongation"/>
    <property type="evidence" value="ECO:0007669"/>
    <property type="project" value="InterPro"/>
</dbReference>
<dbReference type="GO" id="GO:0045905">
    <property type="term" value="P:positive regulation of translational termination"/>
    <property type="evidence" value="ECO:0007669"/>
    <property type="project" value="InterPro"/>
</dbReference>
<dbReference type="GO" id="GO:0006414">
    <property type="term" value="P:translational elongation"/>
    <property type="evidence" value="ECO:0000318"/>
    <property type="project" value="GO_Central"/>
</dbReference>
<dbReference type="CDD" id="cd04467">
    <property type="entry name" value="S1_aIF5A"/>
    <property type="match status" value="1"/>
</dbReference>
<dbReference type="FunFam" id="2.30.30.30:FF:000038">
    <property type="entry name" value="Translation initiation factor 5A"/>
    <property type="match status" value="1"/>
</dbReference>
<dbReference type="FunFam" id="2.40.50.140:FF:000334">
    <property type="entry name" value="Translation initiation factor 5A"/>
    <property type="match status" value="1"/>
</dbReference>
<dbReference type="Gene3D" id="2.30.30.30">
    <property type="match status" value="1"/>
</dbReference>
<dbReference type="Gene3D" id="2.40.50.140">
    <property type="entry name" value="Nucleic acid-binding proteins"/>
    <property type="match status" value="1"/>
</dbReference>
<dbReference type="HAMAP" id="MF_00085">
    <property type="entry name" value="eIF_5A"/>
    <property type="match status" value="1"/>
</dbReference>
<dbReference type="InterPro" id="IPR001884">
    <property type="entry name" value="IF5A-like"/>
</dbReference>
<dbReference type="InterPro" id="IPR048670">
    <property type="entry name" value="IF5A-like_N"/>
</dbReference>
<dbReference type="InterPro" id="IPR012340">
    <property type="entry name" value="NA-bd_OB-fold"/>
</dbReference>
<dbReference type="InterPro" id="IPR014722">
    <property type="entry name" value="Rib_uL2_dom2"/>
</dbReference>
<dbReference type="InterPro" id="IPR019769">
    <property type="entry name" value="Trans_elong_IF5A_hypusine_site"/>
</dbReference>
<dbReference type="InterPro" id="IPR022847">
    <property type="entry name" value="Transl_elong_IF5A_arc"/>
</dbReference>
<dbReference type="InterPro" id="IPR020189">
    <property type="entry name" value="Transl_elong_IF5A_C"/>
</dbReference>
<dbReference type="InterPro" id="IPR008991">
    <property type="entry name" value="Translation_prot_SH3-like_sf"/>
</dbReference>
<dbReference type="NCBIfam" id="TIGR00037">
    <property type="entry name" value="eIF_5A"/>
    <property type="match status" value="1"/>
</dbReference>
<dbReference type="NCBIfam" id="NF003076">
    <property type="entry name" value="PRK03999.1"/>
    <property type="match status" value="1"/>
</dbReference>
<dbReference type="PANTHER" id="PTHR11673">
    <property type="entry name" value="TRANSLATION INITIATION FACTOR 5A FAMILY MEMBER"/>
    <property type="match status" value="1"/>
</dbReference>
<dbReference type="Pfam" id="PF01287">
    <property type="entry name" value="eIF-5a"/>
    <property type="match status" value="1"/>
</dbReference>
<dbReference type="Pfam" id="PF21485">
    <property type="entry name" value="IF5A-like_N"/>
    <property type="match status" value="1"/>
</dbReference>
<dbReference type="PIRSF" id="PIRSF003025">
    <property type="entry name" value="eIF5A"/>
    <property type="match status" value="1"/>
</dbReference>
<dbReference type="SMART" id="SM01376">
    <property type="entry name" value="eIF-5a"/>
    <property type="match status" value="1"/>
</dbReference>
<dbReference type="SUPFAM" id="SSF50249">
    <property type="entry name" value="Nucleic acid-binding proteins"/>
    <property type="match status" value="1"/>
</dbReference>
<dbReference type="SUPFAM" id="SSF50104">
    <property type="entry name" value="Translation proteins SH3-like domain"/>
    <property type="match status" value="1"/>
</dbReference>
<dbReference type="PROSITE" id="PS00302">
    <property type="entry name" value="IF5A_HYPUSINE"/>
    <property type="match status" value="1"/>
</dbReference>
<evidence type="ECO:0000255" key="1">
    <source>
        <dbReference type="HAMAP-Rule" id="MF_00085"/>
    </source>
</evidence>
<keyword id="KW-0963">Cytoplasm</keyword>
<keyword id="KW-0385">Hypusine</keyword>
<keyword id="KW-0396">Initiation factor</keyword>
<keyword id="KW-0648">Protein biosynthesis</keyword>
<keyword id="KW-1185">Reference proteome</keyword>
<gene>
    <name evidence="1" type="primary">eif5a</name>
    <name type="ordered locus">TK0878</name>
</gene>
<proteinExistence type="inferred from homology"/>